<name>HPN_HELPJ</name>
<keyword id="KW-0479">Metal-binding</keyword>
<keyword id="KW-0533">Nickel</keyword>
<keyword id="KW-0677">Repeat</keyword>
<keyword id="KW-0862">Zinc</keyword>
<proteinExistence type="inferred from homology"/>
<accession>P0A0V7</accession>
<accession>Q48251</accession>
<sequence length="60" mass="7077">MAHHEEQHGGHHHHHHHTHHHHYHGGEHHHHHHSSHHEEGCCSTSDSHHQEEGCCHGHHE</sequence>
<protein>
    <recommendedName>
        <fullName>Histidine-rich metal-binding polypeptide</fullName>
    </recommendedName>
</protein>
<comment type="function">
    <text evidence="1">Strongly binds nickel and zinc. Binds other metals less strongly: cobalt &gt; copper &gt; cadmium &gt; manganese. May act to increase, or at least to preserve, urease activity. Exact function is still unknown (By similarity).</text>
</comment>
<dbReference type="EMBL" id="AE001439">
    <property type="protein sequence ID" value="AAD06898.1"/>
    <property type="molecule type" value="Genomic_DNA"/>
</dbReference>
<dbReference type="PIR" id="C64698">
    <property type="entry name" value="C64698"/>
</dbReference>
<dbReference type="KEGG" id="hpj:jhp_1320"/>
<dbReference type="Proteomes" id="UP000000804">
    <property type="component" value="Chromosome"/>
</dbReference>
<dbReference type="GO" id="GO:0046872">
    <property type="term" value="F:metal ion binding"/>
    <property type="evidence" value="ECO:0007669"/>
    <property type="project" value="UniProtKB-KW"/>
</dbReference>
<dbReference type="InterPro" id="IPR049950">
    <property type="entry name" value="Hpn-like"/>
</dbReference>
<dbReference type="NCBIfam" id="NF033705">
    <property type="entry name" value="helico_Hpn"/>
    <property type="match status" value="1"/>
</dbReference>
<organism>
    <name type="scientific">Helicobacter pylori (strain J99 / ATCC 700824)</name>
    <name type="common">Campylobacter pylori J99</name>
    <dbReference type="NCBI Taxonomy" id="85963"/>
    <lineage>
        <taxon>Bacteria</taxon>
        <taxon>Pseudomonadati</taxon>
        <taxon>Campylobacterota</taxon>
        <taxon>Epsilonproteobacteria</taxon>
        <taxon>Campylobacterales</taxon>
        <taxon>Helicobacteraceae</taxon>
        <taxon>Helicobacter</taxon>
    </lineage>
</organism>
<reference key="1">
    <citation type="journal article" date="1999" name="Nature">
        <title>Genomic sequence comparison of two unrelated isolates of the human gastric pathogen Helicobacter pylori.</title>
        <authorList>
            <person name="Alm R.A."/>
            <person name="Ling L.-S.L."/>
            <person name="Moir D.T."/>
            <person name="King B.L."/>
            <person name="Brown E.D."/>
            <person name="Doig P.C."/>
            <person name="Smith D.R."/>
            <person name="Noonan B."/>
            <person name="Guild B.C."/>
            <person name="deJonge B.L."/>
            <person name="Carmel G."/>
            <person name="Tummino P.J."/>
            <person name="Caruso A."/>
            <person name="Uria-Nickelsen M."/>
            <person name="Mills D.M."/>
            <person name="Ives C."/>
            <person name="Gibson R."/>
            <person name="Merberg D."/>
            <person name="Mills S.D."/>
            <person name="Jiang Q."/>
            <person name="Taylor D.E."/>
            <person name="Vovis G.F."/>
            <person name="Trust T.J."/>
        </authorList>
    </citation>
    <scope>NUCLEOTIDE SEQUENCE [LARGE SCALE GENOMIC DNA]</scope>
    <source>
        <strain>J99 / ATCC 700824</strain>
    </source>
</reference>
<feature type="initiator methionine" description="Removed" evidence="1">
    <location>
        <position position="1"/>
    </location>
</feature>
<feature type="chain" id="PRO_0000084043" description="Histidine-rich metal-binding polypeptide">
    <location>
        <begin position="2"/>
        <end position="60"/>
    </location>
</feature>
<feature type="repeat" description="1">
    <location>
        <begin position="38"/>
        <end position="42"/>
    </location>
</feature>
<feature type="repeat" description="2">
    <location>
        <begin position="51"/>
        <end position="55"/>
    </location>
</feature>
<feature type="region of interest" description="Disordered" evidence="2">
    <location>
        <begin position="1"/>
        <end position="60"/>
    </location>
</feature>
<feature type="region of interest" description="2 X 5 AA repeats of E-E-G-C-C">
    <location>
        <begin position="38"/>
        <end position="55"/>
    </location>
</feature>
<feature type="compositionally biased region" description="Basic residues" evidence="2">
    <location>
        <begin position="10"/>
        <end position="35"/>
    </location>
</feature>
<feature type="compositionally biased region" description="Basic and acidic residues" evidence="2">
    <location>
        <begin position="36"/>
        <end position="60"/>
    </location>
</feature>
<gene>
    <name type="primary">hpn</name>
    <name type="ordered locus">jhp_1320</name>
</gene>
<evidence type="ECO:0000250" key="1"/>
<evidence type="ECO:0000256" key="2">
    <source>
        <dbReference type="SAM" id="MobiDB-lite"/>
    </source>
</evidence>